<protein>
    <recommendedName>
        <fullName>Leukotoxin translocation ATP-binding protein LktB</fullName>
        <ecNumber>7.4.2.5</ecNumber>
    </recommendedName>
</protein>
<keyword id="KW-0067">ATP-binding</keyword>
<keyword id="KW-0997">Cell inner membrane</keyword>
<keyword id="KW-1003">Cell membrane</keyword>
<keyword id="KW-0472">Membrane</keyword>
<keyword id="KW-0547">Nucleotide-binding</keyword>
<keyword id="KW-1278">Translocase</keyword>
<keyword id="KW-0812">Transmembrane</keyword>
<keyword id="KW-1133">Transmembrane helix</keyword>
<keyword id="KW-0813">Transport</keyword>
<reference key="1">
    <citation type="journal article" date="2002" name="J. Bacteriol.">
        <title>Mosaic structure and molecular evolution of the leukotoxin operon (lktCABD) in Mannheimia (Pasteurella) haemolytica, Mannheimia glucosida, and Pasteurella trehalosi.</title>
        <authorList>
            <person name="Davies R.L."/>
            <person name="Campbell S."/>
            <person name="Whittam T.S."/>
        </authorList>
    </citation>
    <scope>NUCLEOTIDE SEQUENCE [GENOMIC DNA]</scope>
    <source>
        <strain>Serotype A14 / PH66</strain>
    </source>
</reference>
<comment type="function">
    <text evidence="5">Part of the ABC transporter complex LktBD involved in leukotoxin export. Transmembrane domains (TMD) form a pore in the inner membrane and the ATP-binding domain (NBD) is responsible for energy generation (Probable).</text>
</comment>
<comment type="catalytic activity">
    <reaction>
        <text>ATP + H2O + proteinSide 1 = ADP + phosphate + proteinSide 2.</text>
        <dbReference type="EC" id="7.4.2.5"/>
    </reaction>
</comment>
<comment type="subunit">
    <text evidence="1">Homodimer.</text>
</comment>
<comment type="subcellular location">
    <subcellularLocation>
        <location evidence="5">Cell inner membrane</location>
        <topology evidence="5">Multi-pass membrane protein</topology>
    </subcellularLocation>
</comment>
<comment type="domain">
    <text>In LktB the peptidase C39 domain, the ATP-binding domain (NBD) and the transmembrane domain (TMD) are fused.</text>
</comment>
<comment type="similarity">
    <text evidence="5">Belongs to the ABC transporter superfamily. Protein-1 exporter (TC 3.A.1.109) family.</text>
</comment>
<comment type="caution">
    <text evidence="5">Leu-10 is present instead of the conserved Cys which is expected to be the active site residue of peptidase C39. Thus this protein is presumed to be without peptidase activity.</text>
</comment>
<name>LKB14_MANHA</name>
<accession>P0C087</accession>
<accession>Q934A3</accession>
<dbReference type="EC" id="7.4.2.5"/>
<dbReference type="EMBL" id="AF314508">
    <property type="protein sequence ID" value="AAL12773.1"/>
    <property type="molecule type" value="Genomic_DNA"/>
</dbReference>
<dbReference type="SMR" id="P0C087"/>
<dbReference type="GO" id="GO:0005886">
    <property type="term" value="C:plasma membrane"/>
    <property type="evidence" value="ECO:0007669"/>
    <property type="project" value="UniProtKB-SubCell"/>
</dbReference>
<dbReference type="GO" id="GO:0030256">
    <property type="term" value="C:type I protein secretion system complex"/>
    <property type="evidence" value="ECO:0007669"/>
    <property type="project" value="InterPro"/>
</dbReference>
<dbReference type="GO" id="GO:0140359">
    <property type="term" value="F:ABC-type transporter activity"/>
    <property type="evidence" value="ECO:0007669"/>
    <property type="project" value="InterPro"/>
</dbReference>
<dbReference type="GO" id="GO:0005524">
    <property type="term" value="F:ATP binding"/>
    <property type="evidence" value="ECO:0007669"/>
    <property type="project" value="UniProtKB-KW"/>
</dbReference>
<dbReference type="GO" id="GO:0016887">
    <property type="term" value="F:ATP hydrolysis activity"/>
    <property type="evidence" value="ECO:0007669"/>
    <property type="project" value="InterPro"/>
</dbReference>
<dbReference type="GO" id="GO:0034040">
    <property type="term" value="F:ATPase-coupled lipid transmembrane transporter activity"/>
    <property type="evidence" value="ECO:0007669"/>
    <property type="project" value="TreeGrafter"/>
</dbReference>
<dbReference type="GO" id="GO:0030253">
    <property type="term" value="P:protein secretion by the type I secretion system"/>
    <property type="evidence" value="ECO:0007669"/>
    <property type="project" value="InterPro"/>
</dbReference>
<dbReference type="GO" id="GO:0006508">
    <property type="term" value="P:proteolysis"/>
    <property type="evidence" value="ECO:0007669"/>
    <property type="project" value="InterPro"/>
</dbReference>
<dbReference type="CDD" id="cd18588">
    <property type="entry name" value="ABC_6TM_CyaB_HlyB_like"/>
    <property type="match status" value="1"/>
</dbReference>
<dbReference type="CDD" id="cd03252">
    <property type="entry name" value="ABCC_Hemolysin"/>
    <property type="match status" value="1"/>
</dbReference>
<dbReference type="CDD" id="cd02417">
    <property type="entry name" value="Peptidase_C39_likeA"/>
    <property type="match status" value="1"/>
</dbReference>
<dbReference type="FunFam" id="3.40.50.300:FF:000299">
    <property type="entry name" value="ABC transporter ATP-binding protein/permease"/>
    <property type="match status" value="1"/>
</dbReference>
<dbReference type="FunFam" id="1.20.1560.10:FF:000056">
    <property type="entry name" value="Alpha-hemolysin translocation ATP-binding protein HlyB"/>
    <property type="match status" value="1"/>
</dbReference>
<dbReference type="Gene3D" id="1.20.1560.10">
    <property type="entry name" value="ABC transporter type 1, transmembrane domain"/>
    <property type="match status" value="1"/>
</dbReference>
<dbReference type="Gene3D" id="3.90.70.10">
    <property type="entry name" value="Cysteine proteinases"/>
    <property type="match status" value="1"/>
</dbReference>
<dbReference type="Gene3D" id="3.40.50.300">
    <property type="entry name" value="P-loop containing nucleotide triphosphate hydrolases"/>
    <property type="match status" value="1"/>
</dbReference>
<dbReference type="InterPro" id="IPR003593">
    <property type="entry name" value="AAA+_ATPase"/>
</dbReference>
<dbReference type="InterPro" id="IPR011527">
    <property type="entry name" value="ABC1_TM_dom"/>
</dbReference>
<dbReference type="InterPro" id="IPR036640">
    <property type="entry name" value="ABC1_TM_sf"/>
</dbReference>
<dbReference type="InterPro" id="IPR003439">
    <property type="entry name" value="ABC_transporter-like_ATP-bd"/>
</dbReference>
<dbReference type="InterPro" id="IPR017871">
    <property type="entry name" value="ABC_transporter-like_CS"/>
</dbReference>
<dbReference type="InterPro" id="IPR010132">
    <property type="entry name" value="ATPase_T1SS_HlyB"/>
</dbReference>
<dbReference type="InterPro" id="IPR027417">
    <property type="entry name" value="P-loop_NTPase"/>
</dbReference>
<dbReference type="InterPro" id="IPR005074">
    <property type="entry name" value="Peptidase_C39"/>
</dbReference>
<dbReference type="InterPro" id="IPR039395">
    <property type="entry name" value="Peptidase_C39-like_A"/>
</dbReference>
<dbReference type="InterPro" id="IPR039421">
    <property type="entry name" value="Type_1_exporter"/>
</dbReference>
<dbReference type="NCBIfam" id="TIGR01846">
    <property type="entry name" value="type_I_sec_HlyB"/>
    <property type="match status" value="1"/>
</dbReference>
<dbReference type="PANTHER" id="PTHR24221">
    <property type="entry name" value="ATP-BINDING CASSETTE SUB-FAMILY B"/>
    <property type="match status" value="1"/>
</dbReference>
<dbReference type="PANTHER" id="PTHR24221:SF647">
    <property type="entry name" value="BLL6336 PROTEIN"/>
    <property type="match status" value="1"/>
</dbReference>
<dbReference type="Pfam" id="PF00664">
    <property type="entry name" value="ABC_membrane"/>
    <property type="match status" value="1"/>
</dbReference>
<dbReference type="Pfam" id="PF00005">
    <property type="entry name" value="ABC_tran"/>
    <property type="match status" value="1"/>
</dbReference>
<dbReference type="Pfam" id="PF03412">
    <property type="entry name" value="Peptidase_C39"/>
    <property type="match status" value="1"/>
</dbReference>
<dbReference type="SMART" id="SM00382">
    <property type="entry name" value="AAA"/>
    <property type="match status" value="1"/>
</dbReference>
<dbReference type="SUPFAM" id="SSF90123">
    <property type="entry name" value="ABC transporter transmembrane region"/>
    <property type="match status" value="1"/>
</dbReference>
<dbReference type="SUPFAM" id="SSF52540">
    <property type="entry name" value="P-loop containing nucleoside triphosphate hydrolases"/>
    <property type="match status" value="1"/>
</dbReference>
<dbReference type="PROSITE" id="PS50929">
    <property type="entry name" value="ABC_TM1F"/>
    <property type="match status" value="1"/>
</dbReference>
<dbReference type="PROSITE" id="PS00211">
    <property type="entry name" value="ABC_TRANSPORTER_1"/>
    <property type="match status" value="1"/>
</dbReference>
<dbReference type="PROSITE" id="PS50893">
    <property type="entry name" value="ABC_TRANSPORTER_2"/>
    <property type="match status" value="1"/>
</dbReference>
<dbReference type="PROSITE" id="PS50990">
    <property type="entry name" value="PEPTIDASE_C39"/>
    <property type="match status" value="1"/>
</dbReference>
<gene>
    <name type="primary">lktB</name>
</gene>
<sequence length="708" mass="79699">MEANHQRNDLGLVALTMLAQYHNISLNPEEIKHKFDLDGKGLSLTSWLLAAKSLALKAKHIKKEISRLHLVNLPALVWQDNGKHFLLVKVDTDNNRYLTYNLEQDAPQILSQDEFEACYQGQLILVTSRASVVGQLAKFDFTWFIPAVIKYRKIFLETLIVSIFLQIFALITPLFFQVVMDKVLVHRGFSTLNIITVALAIVIIFEIVLSGLRTYVFSHSTSRIDVELGAKLFRHLLSLPISYFENRRVGDTVARVRELDQIRNFLTGQALTSVLDLLFSFIFFAVMWYYSPKLTLVILGSLPCYILWSIFISPILRRRLDDKFARSADNQAFLVESVTAINMIKAMAVAPQMTDTWDKQLASYVSSSFRVTVLATIGQQGVQLIQKTVMVINLWLGAHLVISGDLSIGQLIAFNMLSGQVIAPVIRLAQLWQDFQQVGISVTRLGDVLNSPTEQYQGKLSLPEIKGDISFKNIRFRYKPDAPTILNNVNLEIRQGEVIGIVGRSGSGKSTLTKLLQRFYIPENGQVLIDGHDLALADPNWLRRQIGVVLQDNVLLNRSIRENIALSDPGMPMERVIYAAKLAGAHDFISELREGYNTIVGEQGAGLSGGQRQRIAIARALVNNPKILIFDEATSALDYESEHIIMQNMQKICQGRTVILIAHRLSTVKNADRIIVMEKGEIVEQGKHHELLQNSNGLYSYLHQLQLN</sequence>
<feature type="chain" id="PRO_0000092385" description="Leukotoxin translocation ATP-binding protein LktB">
    <location>
        <begin position="1"/>
        <end position="708"/>
    </location>
</feature>
<feature type="transmembrane region" description="Helical" evidence="4">
    <location>
        <begin position="159"/>
        <end position="179"/>
    </location>
</feature>
<feature type="transmembrane region" description="Helical" evidence="4">
    <location>
        <begin position="192"/>
        <end position="212"/>
    </location>
</feature>
<feature type="transmembrane region" description="Helical" evidence="4">
    <location>
        <begin position="270"/>
        <end position="290"/>
    </location>
</feature>
<feature type="transmembrane region" description="Helical" evidence="4">
    <location>
        <begin position="296"/>
        <end position="316"/>
    </location>
</feature>
<feature type="transmembrane region" description="Helical" evidence="4">
    <location>
        <begin position="389"/>
        <end position="409"/>
    </location>
</feature>
<feature type="domain" description="Peptidase C39" evidence="2">
    <location>
        <begin position="1"/>
        <end position="126"/>
    </location>
</feature>
<feature type="domain" description="ABC transmembrane type-1" evidence="4">
    <location>
        <begin position="155"/>
        <end position="437"/>
    </location>
</feature>
<feature type="domain" description="ABC transporter" evidence="2 3">
    <location>
        <begin position="469"/>
        <end position="704"/>
    </location>
</feature>
<feature type="binding site" evidence="2 3">
    <location>
        <begin position="503"/>
        <end position="510"/>
    </location>
    <ligand>
        <name>ATP</name>
        <dbReference type="ChEBI" id="CHEBI:30616"/>
    </ligand>
</feature>
<organism>
    <name type="scientific">Mannheimia haemolytica</name>
    <name type="common">Pasteurella haemolytica</name>
    <dbReference type="NCBI Taxonomy" id="75985"/>
    <lineage>
        <taxon>Bacteria</taxon>
        <taxon>Pseudomonadati</taxon>
        <taxon>Pseudomonadota</taxon>
        <taxon>Gammaproteobacteria</taxon>
        <taxon>Pasteurellales</taxon>
        <taxon>Pasteurellaceae</taxon>
        <taxon>Mannheimia</taxon>
    </lineage>
</organism>
<evidence type="ECO:0000250" key="1"/>
<evidence type="ECO:0000255" key="2">
    <source>
        <dbReference type="PROSITE-ProRule" id="PRU00362"/>
    </source>
</evidence>
<evidence type="ECO:0000255" key="3">
    <source>
        <dbReference type="PROSITE-ProRule" id="PRU00434"/>
    </source>
</evidence>
<evidence type="ECO:0000255" key="4">
    <source>
        <dbReference type="PROSITE-ProRule" id="PRU00441"/>
    </source>
</evidence>
<evidence type="ECO:0000305" key="5"/>
<proteinExistence type="inferred from homology"/>